<evidence type="ECO:0000255" key="1">
    <source>
        <dbReference type="HAMAP-Rule" id="MF_01307"/>
    </source>
</evidence>
<evidence type="ECO:0000305" key="2"/>
<feature type="chain" id="PRO_0000131611" description="Small ribosomal subunit protein uS5">
    <location>
        <begin position="1"/>
        <end position="164"/>
    </location>
</feature>
<feature type="domain" description="S5 DRBM" evidence="1">
    <location>
        <begin position="10"/>
        <end position="73"/>
    </location>
</feature>
<organism>
    <name type="scientific">Streptococcus pyogenes serotype M18 (strain MGAS8232)</name>
    <dbReference type="NCBI Taxonomy" id="186103"/>
    <lineage>
        <taxon>Bacteria</taxon>
        <taxon>Bacillati</taxon>
        <taxon>Bacillota</taxon>
        <taxon>Bacilli</taxon>
        <taxon>Lactobacillales</taxon>
        <taxon>Streptococcaceae</taxon>
        <taxon>Streptococcus</taxon>
    </lineage>
</organism>
<accession>P66585</accession>
<accession>Q9A1V7</accession>
<gene>
    <name evidence="1" type="primary">rpsE</name>
    <name type="ordered locus">spyM18_0069</name>
</gene>
<name>RS5_STRP8</name>
<keyword id="KW-0687">Ribonucleoprotein</keyword>
<keyword id="KW-0689">Ribosomal protein</keyword>
<keyword id="KW-0694">RNA-binding</keyword>
<keyword id="KW-0699">rRNA-binding</keyword>
<sequence length="164" mass="17028">MAFKDNAVELEERVVAINRVTKVVKGGRRLRFAALVVVGDGNGRVGFGTGKAQEVPEAIRKAVEAAKKNMIEVPMVGTTIPHEVYTNFGGAKVLLKPAVEGSGVAAGGAVRAVIELAGVADITSKSLGSNTPINIVRATVEGLKQLKRAEEVAALRGISVSDLA</sequence>
<protein>
    <recommendedName>
        <fullName evidence="1">Small ribosomal subunit protein uS5</fullName>
    </recommendedName>
    <alternativeName>
        <fullName evidence="2">30S ribosomal protein S5</fullName>
    </alternativeName>
</protein>
<reference key="1">
    <citation type="journal article" date="2002" name="Proc. Natl. Acad. Sci. U.S.A.">
        <title>Genome sequence and comparative microarray analysis of serotype M18 group A Streptococcus strains associated with acute rheumatic fever outbreaks.</title>
        <authorList>
            <person name="Smoot J.C."/>
            <person name="Barbian K.D."/>
            <person name="Van Gompel J.J."/>
            <person name="Smoot L.M."/>
            <person name="Chaussee M.S."/>
            <person name="Sylva G.L."/>
            <person name="Sturdevant D.E."/>
            <person name="Ricklefs S.M."/>
            <person name="Porcella S.F."/>
            <person name="Parkins L.D."/>
            <person name="Beres S.B."/>
            <person name="Campbell D.S."/>
            <person name="Smith T.M."/>
            <person name="Zhang Q."/>
            <person name="Kapur V."/>
            <person name="Daly J.A."/>
            <person name="Veasy L.G."/>
            <person name="Musser J.M."/>
        </authorList>
    </citation>
    <scope>NUCLEOTIDE SEQUENCE [LARGE SCALE GENOMIC DNA]</scope>
    <source>
        <strain>MGAS8232</strain>
    </source>
</reference>
<proteinExistence type="inferred from homology"/>
<dbReference type="EMBL" id="AE009949">
    <property type="protein sequence ID" value="AAL96893.1"/>
    <property type="molecule type" value="Genomic_DNA"/>
</dbReference>
<dbReference type="RefSeq" id="WP_002986625.1">
    <property type="nucleotide sequence ID" value="NC_003485.1"/>
</dbReference>
<dbReference type="SMR" id="P66585"/>
<dbReference type="GeneID" id="69900043"/>
<dbReference type="KEGG" id="spm:spyM18_0069"/>
<dbReference type="HOGENOM" id="CLU_065898_2_2_9"/>
<dbReference type="GO" id="GO:0015935">
    <property type="term" value="C:small ribosomal subunit"/>
    <property type="evidence" value="ECO:0007669"/>
    <property type="project" value="InterPro"/>
</dbReference>
<dbReference type="GO" id="GO:0019843">
    <property type="term" value="F:rRNA binding"/>
    <property type="evidence" value="ECO:0007669"/>
    <property type="project" value="UniProtKB-UniRule"/>
</dbReference>
<dbReference type="GO" id="GO:0003735">
    <property type="term" value="F:structural constituent of ribosome"/>
    <property type="evidence" value="ECO:0007669"/>
    <property type="project" value="InterPro"/>
</dbReference>
<dbReference type="GO" id="GO:0006412">
    <property type="term" value="P:translation"/>
    <property type="evidence" value="ECO:0007669"/>
    <property type="project" value="UniProtKB-UniRule"/>
</dbReference>
<dbReference type="FunFam" id="3.30.160.20:FF:000001">
    <property type="entry name" value="30S ribosomal protein S5"/>
    <property type="match status" value="1"/>
</dbReference>
<dbReference type="FunFam" id="3.30.230.10:FF:000002">
    <property type="entry name" value="30S ribosomal protein S5"/>
    <property type="match status" value="1"/>
</dbReference>
<dbReference type="Gene3D" id="3.30.160.20">
    <property type="match status" value="1"/>
</dbReference>
<dbReference type="Gene3D" id="3.30.230.10">
    <property type="match status" value="1"/>
</dbReference>
<dbReference type="HAMAP" id="MF_01307_B">
    <property type="entry name" value="Ribosomal_uS5_B"/>
    <property type="match status" value="1"/>
</dbReference>
<dbReference type="InterPro" id="IPR020568">
    <property type="entry name" value="Ribosomal_Su5_D2-typ_SF"/>
</dbReference>
<dbReference type="InterPro" id="IPR000851">
    <property type="entry name" value="Ribosomal_uS5"/>
</dbReference>
<dbReference type="InterPro" id="IPR005712">
    <property type="entry name" value="Ribosomal_uS5_bac-type"/>
</dbReference>
<dbReference type="InterPro" id="IPR005324">
    <property type="entry name" value="Ribosomal_uS5_C"/>
</dbReference>
<dbReference type="InterPro" id="IPR013810">
    <property type="entry name" value="Ribosomal_uS5_N"/>
</dbReference>
<dbReference type="InterPro" id="IPR018192">
    <property type="entry name" value="Ribosomal_uS5_N_CS"/>
</dbReference>
<dbReference type="InterPro" id="IPR014721">
    <property type="entry name" value="Ribsml_uS5_D2-typ_fold_subgr"/>
</dbReference>
<dbReference type="NCBIfam" id="TIGR01021">
    <property type="entry name" value="rpsE_bact"/>
    <property type="match status" value="1"/>
</dbReference>
<dbReference type="PANTHER" id="PTHR48277">
    <property type="entry name" value="MITOCHONDRIAL RIBOSOMAL PROTEIN S5"/>
    <property type="match status" value="1"/>
</dbReference>
<dbReference type="PANTHER" id="PTHR48277:SF1">
    <property type="entry name" value="MITOCHONDRIAL RIBOSOMAL PROTEIN S5"/>
    <property type="match status" value="1"/>
</dbReference>
<dbReference type="Pfam" id="PF00333">
    <property type="entry name" value="Ribosomal_S5"/>
    <property type="match status" value="1"/>
</dbReference>
<dbReference type="Pfam" id="PF03719">
    <property type="entry name" value="Ribosomal_S5_C"/>
    <property type="match status" value="1"/>
</dbReference>
<dbReference type="SUPFAM" id="SSF54768">
    <property type="entry name" value="dsRNA-binding domain-like"/>
    <property type="match status" value="1"/>
</dbReference>
<dbReference type="SUPFAM" id="SSF54211">
    <property type="entry name" value="Ribosomal protein S5 domain 2-like"/>
    <property type="match status" value="1"/>
</dbReference>
<dbReference type="PROSITE" id="PS00585">
    <property type="entry name" value="RIBOSOMAL_S5"/>
    <property type="match status" value="1"/>
</dbReference>
<dbReference type="PROSITE" id="PS50881">
    <property type="entry name" value="S5_DSRBD"/>
    <property type="match status" value="1"/>
</dbReference>
<comment type="function">
    <text evidence="1">With S4 and S12 plays an important role in translational accuracy.</text>
</comment>
<comment type="function">
    <text evidence="1">Located at the back of the 30S subunit body where it stabilizes the conformation of the head with respect to the body.</text>
</comment>
<comment type="subunit">
    <text evidence="1">Part of the 30S ribosomal subunit. Contacts proteins S4 and S8.</text>
</comment>
<comment type="domain">
    <text>The N-terminal domain interacts with the head of the 30S subunit; the C-terminal domain interacts with the body and contacts protein S4. The interaction surface between S4 and S5 is involved in control of translational fidelity.</text>
</comment>
<comment type="similarity">
    <text evidence="1">Belongs to the universal ribosomal protein uS5 family.</text>
</comment>